<dbReference type="EMBL" id="AK019358">
    <property type="protein sequence ID" value="BAB31677.1"/>
    <property type="molecule type" value="mRNA"/>
</dbReference>
<dbReference type="EMBL" id="AK002223">
    <property type="protein sequence ID" value="BAB21946.1"/>
    <property type="molecule type" value="mRNA"/>
</dbReference>
<dbReference type="EMBL" id="AK002868">
    <property type="protein sequence ID" value="BAB22417.1"/>
    <property type="molecule type" value="mRNA"/>
</dbReference>
<dbReference type="EMBL" id="AK003277">
    <property type="protein sequence ID" value="BAB22684.1"/>
    <property type="molecule type" value="mRNA"/>
</dbReference>
<dbReference type="EMBL" id="AK008477">
    <property type="protein sequence ID" value="BAB25690.1"/>
    <property type="molecule type" value="mRNA"/>
</dbReference>
<dbReference type="EMBL" id="AK008534">
    <property type="protein sequence ID" value="BAB25727.1"/>
    <property type="molecule type" value="mRNA"/>
</dbReference>
<dbReference type="EMBL" id="AK012254">
    <property type="protein sequence ID" value="BAB28121.1"/>
    <property type="molecule type" value="mRNA"/>
</dbReference>
<dbReference type="EMBL" id="AK019181">
    <property type="protein sequence ID" value="BAB31590.1"/>
    <property type="molecule type" value="mRNA"/>
</dbReference>
<dbReference type="EMBL" id="AK019218">
    <property type="protein sequence ID" value="BAB31608.1"/>
    <property type="molecule type" value="mRNA"/>
</dbReference>
<dbReference type="EMBL" id="BC051927">
    <property type="protein sequence ID" value="AAH51927.2"/>
    <property type="molecule type" value="mRNA"/>
</dbReference>
<dbReference type="EMBL" id="BC056983">
    <property type="protein sequence ID" value="AAH56983.1"/>
    <property type="molecule type" value="mRNA"/>
</dbReference>
<dbReference type="CCDS" id="CCDS57055.1"/>
<dbReference type="RefSeq" id="NP_080581.1">
    <property type="nucleotide sequence ID" value="NM_026305.2"/>
</dbReference>
<dbReference type="PDB" id="2FNJ">
    <property type="method" value="X-ray"/>
    <property type="resolution" value="1.80 A"/>
    <property type="chains" value="B=1-118"/>
</dbReference>
<dbReference type="PDB" id="4JGH">
    <property type="method" value="X-ray"/>
    <property type="resolution" value="3.00 A"/>
    <property type="chains" value="B=1-118"/>
</dbReference>
<dbReference type="PDBsum" id="2FNJ"/>
<dbReference type="PDBsum" id="4JGH"/>
<dbReference type="BMRB" id="P62869"/>
<dbReference type="SMR" id="P62869"/>
<dbReference type="BioGRID" id="212356">
    <property type="interactions" value="28"/>
</dbReference>
<dbReference type="CORUM" id="P62869"/>
<dbReference type="FunCoup" id="P62869">
    <property type="interactions" value="1925"/>
</dbReference>
<dbReference type="IntAct" id="P62869">
    <property type="interactions" value="10"/>
</dbReference>
<dbReference type="MINT" id="P62869"/>
<dbReference type="STRING" id="10090.ENSMUSP00000066210"/>
<dbReference type="iPTMnet" id="P62869"/>
<dbReference type="PhosphoSitePlus" id="P62869"/>
<dbReference type="SwissPalm" id="P62869"/>
<dbReference type="REPRODUCTION-2DPAGE" id="P62869"/>
<dbReference type="jPOST" id="P62869"/>
<dbReference type="PaxDb" id="10090-ENSMUSP00000066210"/>
<dbReference type="PeptideAtlas" id="P62869"/>
<dbReference type="ProteomicsDB" id="275601"/>
<dbReference type="Pumba" id="P62869"/>
<dbReference type="Antibodypedia" id="23893">
    <property type="antibodies" value="338 antibodies from 33 providers"/>
</dbReference>
<dbReference type="DNASU" id="67673"/>
<dbReference type="Ensembl" id="ENSMUST00000069579.7">
    <property type="protein sequence ID" value="ENSMUSP00000066210.6"/>
    <property type="gene ID" value="ENSMUSG00000055839.7"/>
</dbReference>
<dbReference type="GeneID" id="67673"/>
<dbReference type="KEGG" id="mmu:67673"/>
<dbReference type="UCSC" id="uc008atr.1">
    <property type="organism name" value="mouse"/>
</dbReference>
<dbReference type="AGR" id="MGI:1914923"/>
<dbReference type="CTD" id="6923"/>
<dbReference type="MGI" id="MGI:1914923">
    <property type="gene designation" value="Elob"/>
</dbReference>
<dbReference type="VEuPathDB" id="HostDB:ENSMUSG00000055839"/>
<dbReference type="eggNOG" id="KOG4495">
    <property type="taxonomic scope" value="Eukaryota"/>
</dbReference>
<dbReference type="GeneTree" id="ENSGT00390000018316"/>
<dbReference type="HOGENOM" id="CLU_139243_0_0_1"/>
<dbReference type="InParanoid" id="P62869"/>
<dbReference type="OMA" id="GQEQMDQ"/>
<dbReference type="OrthoDB" id="7537057at2759"/>
<dbReference type="PhylomeDB" id="P62869"/>
<dbReference type="TreeFam" id="TF325964"/>
<dbReference type="Reactome" id="R-MMU-112382">
    <property type="pathway name" value="Formation of RNA Pol II elongation complex"/>
</dbReference>
<dbReference type="Reactome" id="R-MMU-1234176">
    <property type="pathway name" value="Oxygen-dependent proline hydroxylation of Hypoxia-inducible Factor Alpha"/>
</dbReference>
<dbReference type="Reactome" id="R-MMU-674695">
    <property type="pathway name" value="RNA Polymerase II Pre-transcription Events"/>
</dbReference>
<dbReference type="Reactome" id="R-MMU-6796648">
    <property type="pathway name" value="TP53 Regulates Transcription of DNA Repair Genes"/>
</dbReference>
<dbReference type="Reactome" id="R-MMU-75955">
    <property type="pathway name" value="RNA Polymerase II Transcription Elongation"/>
</dbReference>
<dbReference type="Reactome" id="R-MMU-8951664">
    <property type="pathway name" value="Neddylation"/>
</dbReference>
<dbReference type="Reactome" id="R-MMU-9705462">
    <property type="pathway name" value="Inactivation of CSF3 (G-CSF) signaling"/>
</dbReference>
<dbReference type="Reactome" id="R-MMU-983168">
    <property type="pathway name" value="Antigen processing: Ubiquitination &amp; Proteasome degradation"/>
</dbReference>
<dbReference type="UniPathway" id="UPA00143"/>
<dbReference type="BioGRID-ORCS" id="67673">
    <property type="hits" value="31 hits in 72 CRISPR screens"/>
</dbReference>
<dbReference type="ChiTaRS" id="Elob">
    <property type="organism name" value="mouse"/>
</dbReference>
<dbReference type="EvolutionaryTrace" id="P62869"/>
<dbReference type="PRO" id="PR:P62869"/>
<dbReference type="Proteomes" id="UP000000589">
    <property type="component" value="Chromosome 17"/>
</dbReference>
<dbReference type="RNAct" id="P62869">
    <property type="molecule type" value="protein"/>
</dbReference>
<dbReference type="Bgee" id="ENSMUSG00000055839">
    <property type="expression patterns" value="Expressed in neural tube and 78 other cell types or tissues"/>
</dbReference>
<dbReference type="ExpressionAtlas" id="P62869">
    <property type="expression patterns" value="baseline and differential"/>
</dbReference>
<dbReference type="GO" id="GO:0031462">
    <property type="term" value="C:Cul2-RING ubiquitin ligase complex"/>
    <property type="evidence" value="ECO:0007669"/>
    <property type="project" value="Ensembl"/>
</dbReference>
<dbReference type="GO" id="GO:0031466">
    <property type="term" value="C:Cul5-RING ubiquitin ligase complex"/>
    <property type="evidence" value="ECO:0000314"/>
    <property type="project" value="UniProtKB"/>
</dbReference>
<dbReference type="GO" id="GO:0005829">
    <property type="term" value="C:cytosol"/>
    <property type="evidence" value="ECO:0000304"/>
    <property type="project" value="Reactome"/>
</dbReference>
<dbReference type="GO" id="GO:0070449">
    <property type="term" value="C:elongin complex"/>
    <property type="evidence" value="ECO:0000314"/>
    <property type="project" value="UniProtKB"/>
</dbReference>
<dbReference type="GO" id="GO:0030891">
    <property type="term" value="C:VCB complex"/>
    <property type="evidence" value="ECO:0007669"/>
    <property type="project" value="InterPro"/>
</dbReference>
<dbReference type="GO" id="GO:0001222">
    <property type="term" value="F:transcription corepressor binding"/>
    <property type="evidence" value="ECO:0007669"/>
    <property type="project" value="Ensembl"/>
</dbReference>
<dbReference type="GO" id="GO:0031625">
    <property type="term" value="F:ubiquitin protein ligase binding"/>
    <property type="evidence" value="ECO:0007669"/>
    <property type="project" value="Ensembl"/>
</dbReference>
<dbReference type="GO" id="GO:0016567">
    <property type="term" value="P:protein ubiquitination"/>
    <property type="evidence" value="ECO:0007669"/>
    <property type="project" value="UniProtKB-UniPathway"/>
</dbReference>
<dbReference type="GO" id="GO:0140958">
    <property type="term" value="P:target-directed miRNA degradation"/>
    <property type="evidence" value="ECO:0007669"/>
    <property type="project" value="Ensembl"/>
</dbReference>
<dbReference type="GO" id="GO:0006368">
    <property type="term" value="P:transcription elongation by RNA polymerase II"/>
    <property type="evidence" value="ECO:0007669"/>
    <property type="project" value="InterPro"/>
</dbReference>
<dbReference type="GO" id="GO:0006367">
    <property type="term" value="P:transcription initiation at RNA polymerase II promoter"/>
    <property type="evidence" value="ECO:0007669"/>
    <property type="project" value="Ensembl"/>
</dbReference>
<dbReference type="CDD" id="cd01788">
    <property type="entry name" value="Ubl_ElonginB"/>
    <property type="match status" value="1"/>
</dbReference>
<dbReference type="FunFam" id="3.10.20.90:FF:000108">
    <property type="entry name" value="Elongin-B"/>
    <property type="match status" value="1"/>
</dbReference>
<dbReference type="Gene3D" id="3.10.20.90">
    <property type="entry name" value="Phosphatidylinositol 3-kinase Catalytic Subunit, Chain A, domain 1"/>
    <property type="match status" value="1"/>
</dbReference>
<dbReference type="IDEAL" id="IID50216"/>
<dbReference type="InterPro" id="IPR039049">
    <property type="entry name" value="ELOB"/>
</dbReference>
<dbReference type="InterPro" id="IPR000626">
    <property type="entry name" value="Ubiquitin-like_dom"/>
</dbReference>
<dbReference type="InterPro" id="IPR029071">
    <property type="entry name" value="Ubiquitin-like_domsf"/>
</dbReference>
<dbReference type="PANTHER" id="PTHR13248:SF2">
    <property type="entry name" value="ELONGIN-B"/>
    <property type="match status" value="1"/>
</dbReference>
<dbReference type="PANTHER" id="PTHR13248">
    <property type="entry name" value="TRANSCRIPTION ELONGATION FACTOR B POLYPEPTIDE 2"/>
    <property type="match status" value="1"/>
</dbReference>
<dbReference type="Pfam" id="PF00240">
    <property type="entry name" value="ubiquitin"/>
    <property type="match status" value="1"/>
</dbReference>
<dbReference type="SMART" id="SM00213">
    <property type="entry name" value="UBQ"/>
    <property type="match status" value="1"/>
</dbReference>
<dbReference type="SUPFAM" id="SSF54236">
    <property type="entry name" value="Ubiquitin-like"/>
    <property type="match status" value="1"/>
</dbReference>
<dbReference type="PROSITE" id="PS50053">
    <property type="entry name" value="UBIQUITIN_2"/>
    <property type="match status" value="1"/>
</dbReference>
<name>ELOB_MOUSE</name>
<accession>P62869</accession>
<accession>Q63529</accession>
<accession>Q80W20</accession>
<proteinExistence type="evidence at protein level"/>
<gene>
    <name evidence="13" type="primary">Elob</name>
    <name type="synonym">Tceb2</name>
</gene>
<feature type="chain" id="PRO_0000114915" description="Elongin-B">
    <location>
        <begin position="1"/>
        <end position="118"/>
    </location>
</feature>
<feature type="domain" description="Ubiquitin-like" evidence="2">
    <location>
        <begin position="1"/>
        <end position="79"/>
    </location>
</feature>
<feature type="region of interest" description="Disordered" evidence="3">
    <location>
        <begin position="91"/>
        <end position="118"/>
    </location>
</feature>
<feature type="compositionally biased region" description="Polar residues" evidence="3">
    <location>
        <begin position="108"/>
        <end position="118"/>
    </location>
</feature>
<feature type="modified residue" description="N-acetylmethionine" evidence="1">
    <location>
        <position position="1"/>
    </location>
</feature>
<feature type="modified residue" description="Phosphothreonine" evidence="15">
    <location>
        <position position="84"/>
    </location>
</feature>
<feature type="modified residue" description="Phosphoserine" evidence="15">
    <location>
        <position position="108"/>
    </location>
</feature>
<feature type="modified residue" description="Phosphoserine" evidence="15">
    <location>
        <position position="111"/>
    </location>
</feature>
<feature type="strand" evidence="16">
    <location>
        <begin position="2"/>
        <end position="10"/>
    </location>
</feature>
<feature type="strand" evidence="16">
    <location>
        <begin position="12"/>
        <end position="19"/>
    </location>
</feature>
<feature type="helix" evidence="16">
    <location>
        <begin position="24"/>
        <end position="35"/>
    </location>
</feature>
<feature type="helix" evidence="16">
    <location>
        <begin position="39"/>
        <end position="41"/>
    </location>
</feature>
<feature type="strand" evidence="16">
    <location>
        <begin position="42"/>
        <end position="46"/>
    </location>
</feature>
<feature type="helix" evidence="16">
    <location>
        <begin position="57"/>
        <end position="60"/>
    </location>
</feature>
<feature type="turn" evidence="16">
    <location>
        <begin position="64"/>
        <end position="66"/>
    </location>
</feature>
<feature type="strand" evidence="16">
    <location>
        <begin position="73"/>
        <end position="83"/>
    </location>
</feature>
<feature type="helix" evidence="17">
    <location>
        <begin position="101"/>
        <end position="103"/>
    </location>
</feature>
<reference key="1">
    <citation type="journal article" date="2005" name="Science">
        <title>The transcriptional landscape of the mammalian genome.</title>
        <authorList>
            <person name="Carninci P."/>
            <person name="Kasukawa T."/>
            <person name="Katayama S."/>
            <person name="Gough J."/>
            <person name="Frith M.C."/>
            <person name="Maeda N."/>
            <person name="Oyama R."/>
            <person name="Ravasi T."/>
            <person name="Lenhard B."/>
            <person name="Wells C."/>
            <person name="Kodzius R."/>
            <person name="Shimokawa K."/>
            <person name="Bajic V.B."/>
            <person name="Brenner S.E."/>
            <person name="Batalov S."/>
            <person name="Forrest A.R."/>
            <person name="Zavolan M."/>
            <person name="Davis M.J."/>
            <person name="Wilming L.G."/>
            <person name="Aidinis V."/>
            <person name="Allen J.E."/>
            <person name="Ambesi-Impiombato A."/>
            <person name="Apweiler R."/>
            <person name="Aturaliya R.N."/>
            <person name="Bailey T.L."/>
            <person name="Bansal M."/>
            <person name="Baxter L."/>
            <person name="Beisel K.W."/>
            <person name="Bersano T."/>
            <person name="Bono H."/>
            <person name="Chalk A.M."/>
            <person name="Chiu K.P."/>
            <person name="Choudhary V."/>
            <person name="Christoffels A."/>
            <person name="Clutterbuck D.R."/>
            <person name="Crowe M.L."/>
            <person name="Dalla E."/>
            <person name="Dalrymple B.P."/>
            <person name="de Bono B."/>
            <person name="Della Gatta G."/>
            <person name="di Bernardo D."/>
            <person name="Down T."/>
            <person name="Engstrom P."/>
            <person name="Fagiolini M."/>
            <person name="Faulkner G."/>
            <person name="Fletcher C.F."/>
            <person name="Fukushima T."/>
            <person name="Furuno M."/>
            <person name="Futaki S."/>
            <person name="Gariboldi M."/>
            <person name="Georgii-Hemming P."/>
            <person name="Gingeras T.R."/>
            <person name="Gojobori T."/>
            <person name="Green R.E."/>
            <person name="Gustincich S."/>
            <person name="Harbers M."/>
            <person name="Hayashi Y."/>
            <person name="Hensch T.K."/>
            <person name="Hirokawa N."/>
            <person name="Hill D."/>
            <person name="Huminiecki L."/>
            <person name="Iacono M."/>
            <person name="Ikeo K."/>
            <person name="Iwama A."/>
            <person name="Ishikawa T."/>
            <person name="Jakt M."/>
            <person name="Kanapin A."/>
            <person name="Katoh M."/>
            <person name="Kawasawa Y."/>
            <person name="Kelso J."/>
            <person name="Kitamura H."/>
            <person name="Kitano H."/>
            <person name="Kollias G."/>
            <person name="Krishnan S.P."/>
            <person name="Kruger A."/>
            <person name="Kummerfeld S.K."/>
            <person name="Kurochkin I.V."/>
            <person name="Lareau L.F."/>
            <person name="Lazarevic D."/>
            <person name="Lipovich L."/>
            <person name="Liu J."/>
            <person name="Liuni S."/>
            <person name="McWilliam S."/>
            <person name="Madan Babu M."/>
            <person name="Madera M."/>
            <person name="Marchionni L."/>
            <person name="Matsuda H."/>
            <person name="Matsuzawa S."/>
            <person name="Miki H."/>
            <person name="Mignone F."/>
            <person name="Miyake S."/>
            <person name="Morris K."/>
            <person name="Mottagui-Tabar S."/>
            <person name="Mulder N."/>
            <person name="Nakano N."/>
            <person name="Nakauchi H."/>
            <person name="Ng P."/>
            <person name="Nilsson R."/>
            <person name="Nishiguchi S."/>
            <person name="Nishikawa S."/>
            <person name="Nori F."/>
            <person name="Ohara O."/>
            <person name="Okazaki Y."/>
            <person name="Orlando V."/>
            <person name="Pang K.C."/>
            <person name="Pavan W.J."/>
            <person name="Pavesi G."/>
            <person name="Pesole G."/>
            <person name="Petrovsky N."/>
            <person name="Piazza S."/>
            <person name="Reed J."/>
            <person name="Reid J.F."/>
            <person name="Ring B.Z."/>
            <person name="Ringwald M."/>
            <person name="Rost B."/>
            <person name="Ruan Y."/>
            <person name="Salzberg S.L."/>
            <person name="Sandelin A."/>
            <person name="Schneider C."/>
            <person name="Schoenbach C."/>
            <person name="Sekiguchi K."/>
            <person name="Semple C.A."/>
            <person name="Seno S."/>
            <person name="Sessa L."/>
            <person name="Sheng Y."/>
            <person name="Shibata Y."/>
            <person name="Shimada H."/>
            <person name="Shimada K."/>
            <person name="Silva D."/>
            <person name="Sinclair B."/>
            <person name="Sperling S."/>
            <person name="Stupka E."/>
            <person name="Sugiura K."/>
            <person name="Sultana R."/>
            <person name="Takenaka Y."/>
            <person name="Taki K."/>
            <person name="Tammoja K."/>
            <person name="Tan S.L."/>
            <person name="Tang S."/>
            <person name="Taylor M.S."/>
            <person name="Tegner J."/>
            <person name="Teichmann S.A."/>
            <person name="Ueda H.R."/>
            <person name="van Nimwegen E."/>
            <person name="Verardo R."/>
            <person name="Wei C.L."/>
            <person name="Yagi K."/>
            <person name="Yamanishi H."/>
            <person name="Zabarovsky E."/>
            <person name="Zhu S."/>
            <person name="Zimmer A."/>
            <person name="Hide W."/>
            <person name="Bult C."/>
            <person name="Grimmond S.M."/>
            <person name="Teasdale R.D."/>
            <person name="Liu E.T."/>
            <person name="Brusic V."/>
            <person name="Quackenbush J."/>
            <person name="Wahlestedt C."/>
            <person name="Mattick J.S."/>
            <person name="Hume D.A."/>
            <person name="Kai C."/>
            <person name="Sasaki D."/>
            <person name="Tomaru Y."/>
            <person name="Fukuda S."/>
            <person name="Kanamori-Katayama M."/>
            <person name="Suzuki M."/>
            <person name="Aoki J."/>
            <person name="Arakawa T."/>
            <person name="Iida J."/>
            <person name="Imamura K."/>
            <person name="Itoh M."/>
            <person name="Kato T."/>
            <person name="Kawaji H."/>
            <person name="Kawagashira N."/>
            <person name="Kawashima T."/>
            <person name="Kojima M."/>
            <person name="Kondo S."/>
            <person name="Konno H."/>
            <person name="Nakano K."/>
            <person name="Ninomiya N."/>
            <person name="Nishio T."/>
            <person name="Okada M."/>
            <person name="Plessy C."/>
            <person name="Shibata K."/>
            <person name="Shiraki T."/>
            <person name="Suzuki S."/>
            <person name="Tagami M."/>
            <person name="Waki K."/>
            <person name="Watahiki A."/>
            <person name="Okamura-Oho Y."/>
            <person name="Suzuki H."/>
            <person name="Kawai J."/>
            <person name="Hayashizaki Y."/>
        </authorList>
    </citation>
    <scope>NUCLEOTIDE SEQUENCE [LARGE SCALE MRNA]</scope>
    <source>
        <strain>C57BL/6J</strain>
        <tissue>Embryo</tissue>
        <tissue>Hippocampus</tissue>
        <tissue>Kidney</tissue>
        <tissue>Small intestine</tissue>
    </source>
</reference>
<reference key="2">
    <citation type="journal article" date="2004" name="Genome Res.">
        <title>The status, quality, and expansion of the NIH full-length cDNA project: the Mammalian Gene Collection (MGC).</title>
        <authorList>
            <consortium name="The MGC Project Team"/>
        </authorList>
    </citation>
    <scope>NUCLEOTIDE SEQUENCE [LARGE SCALE MRNA]</scope>
    <source>
        <strain>C57BL/6J</strain>
        <tissue>Brain</tissue>
    </source>
</reference>
<reference key="3">
    <citation type="journal article" date="1999" name="Proc. Natl. Acad. Sci. U.S.A.">
        <title>The conserved SOCS box motif in suppressors of cytokine signaling binds to elongins B and C and may couple bound proteins to proteasomal degradation.</title>
        <authorList>
            <person name="Zhang J.-G."/>
            <person name="Farley A."/>
            <person name="Nicholson S.E."/>
            <person name="Willson T.A."/>
            <person name="Zugaro L.M."/>
            <person name="Simpson R.J."/>
            <person name="Moritz R.L."/>
            <person name="Cary D."/>
            <person name="Richardson R."/>
            <person name="Hausmann G."/>
            <person name="Kile B.J."/>
            <person name="Kent S.B.H."/>
            <person name="Alexander W.S."/>
            <person name="Metcalf D."/>
            <person name="Hilton D.J."/>
            <person name="Nicola N.A."/>
            <person name="Baca M."/>
        </authorList>
    </citation>
    <scope>INTERACTION WITH SOCS1</scope>
</reference>
<reference key="4">
    <citation type="journal article" date="2001" name="J. Biol. Chem.">
        <title>Muf1, a novel elongin BC-interacting leucine-rich repeat protein that can assemble with Cul5 and Rbx1 to reconstitute a ubiquitin ligase.</title>
        <authorList>
            <person name="Kamura T."/>
            <person name="Burian D."/>
            <person name="Yan Q."/>
            <person name="Schmidt S.L."/>
            <person name="Lane W.S."/>
            <person name="Querido E."/>
            <person name="Branton P.E."/>
            <person name="Shilatifard A."/>
            <person name="Conaway R.C."/>
            <person name="Conaway J.W."/>
        </authorList>
    </citation>
    <scope>IDENTIFICATION IN E3 UBIQUITIN LIGASE COMPLEXES</scope>
</reference>
<reference key="5">
    <citation type="journal article" date="2010" name="Cell">
        <title>A tissue-specific atlas of mouse protein phosphorylation and expression.</title>
        <authorList>
            <person name="Huttlin E.L."/>
            <person name="Jedrychowski M.P."/>
            <person name="Elias J.E."/>
            <person name="Goswami T."/>
            <person name="Rad R."/>
            <person name="Beausoleil S.A."/>
            <person name="Villen J."/>
            <person name="Haas W."/>
            <person name="Sowa M.E."/>
            <person name="Gygi S.P."/>
        </authorList>
    </citation>
    <scope>PHOSPHORYLATION [LARGE SCALE ANALYSIS] AT THR-84; SER-108 AND SER-111</scope>
    <scope>IDENTIFICATION BY MASS SPECTROMETRY [LARGE SCALE ANALYSIS]</scope>
    <source>
        <tissue>Brain</tissue>
        <tissue>Brown adipose tissue</tissue>
        <tissue>Heart</tissue>
        <tissue>Kidney</tissue>
        <tissue>Liver</tissue>
        <tissue>Lung</tissue>
        <tissue>Pancreas</tissue>
        <tissue>Spleen</tissue>
        <tissue>Testis</tissue>
    </source>
</reference>
<reference key="6">
    <citation type="journal article" date="2016" name="Mol. Cell">
        <title>EPOP functionally links elongin and Polycomb in pluripotent stem cells.</title>
        <authorList>
            <person name="Beringer M."/>
            <person name="Pisano P."/>
            <person name="Di Carlo V."/>
            <person name="Blanco E."/>
            <person name="Chammas P."/>
            <person name="Vizan P."/>
            <person name="Gutierrez A."/>
            <person name="Aranda S."/>
            <person name="Payer B."/>
            <person name="Wierer M."/>
            <person name="Di Croce L."/>
        </authorList>
    </citation>
    <scope>FUNCTION</scope>
    <scope>INTERACTION WITH EPOP</scope>
</reference>
<reference key="7">
    <citation type="journal article" date="2016" name="Mol. Cell">
        <title>EPOP interacts with elongin BC and USP7 to modulate the chromatin landscape.</title>
        <authorList>
            <person name="Liefke R."/>
            <person name="Karwacki-Neisius V."/>
            <person name="Shi Y."/>
        </authorList>
    </citation>
    <scope>FUNCTION</scope>
    <scope>INTERACTION WITH EPOP</scope>
</reference>
<reference key="8">
    <citation type="journal article" date="2017" name="Mol. Cell">
        <authorList>
            <person name="Liefke R."/>
            <person name="Karwacki-Neisius V."/>
            <person name="Shi Y."/>
        </authorList>
    </citation>
    <scope>ERRATUM OF PUBMED:27863226</scope>
</reference>
<reference key="9">
    <citation type="journal article" date="2021" name="EMBO Rep.">
        <title>CUL2LRR1, TRAIP and p97 control CMG helicase disassembly in the mammalian cell cycle.</title>
        <authorList>
            <person name="Villa F."/>
            <person name="Fujisawa R."/>
            <person name="Ainsworth J."/>
            <person name="Nishimura K."/>
            <person name="Lie-A-Ling M."/>
            <person name="Lacaud G."/>
            <person name="Labib K.P."/>
        </authorList>
    </citation>
    <scope>FUNCTION</scope>
    <scope>SUBUNIT</scope>
    <scope>SUBCELLULAR LOCATION</scope>
    <scope>IDENTIFICATION IN E3 UBIQUITIN LIGASE COMPLEX</scope>
</reference>
<reference key="10">
    <citation type="journal article" date="2006" name="EMBO J.">
        <title>Structural and functional insights into the B30.2/SPRY domain.</title>
        <authorList>
            <person name="Woo J.S."/>
            <person name="Imm J.H."/>
            <person name="Min C.K."/>
            <person name="Kim K.J."/>
            <person name="Cha S.S."/>
            <person name="Oh B.H."/>
        </authorList>
    </citation>
    <scope>X-RAY CRYSTALLOGRAPHY (1.80 ANGSTROMS) IN COMPLEX WITH ELONGIN C AND DROSOPHILA GUS</scope>
</reference>
<reference evidence="14" key="11">
    <citation type="journal article" date="2013" name="Acta Crystallogr. D">
        <title>Structural basis of intersubunit recognition in elongin BC-cullin 5-SOCS box ubiquitin-protein ligase complexes.</title>
        <authorList>
            <person name="Kim Y.K."/>
            <person name="Kwak M.J."/>
            <person name="Ku B."/>
            <person name="Suh H.Y."/>
            <person name="Joo K."/>
            <person name="Lee J."/>
            <person name="Jung J.U."/>
            <person name="Oh B.H."/>
        </authorList>
    </citation>
    <scope>X-RAY CRYSTALLOGRAPHY (3.00 ANGSTROMS) IN COMPLEX WITH CUL5; ELOC AND SOCS2</scope>
    <scope>IDENTIFICATION IN E3 UBIQUITIN LIGASE COMPLEX</scope>
</reference>
<protein>
    <recommendedName>
        <fullName>Elongin-B</fullName>
        <shortName>EloB</shortName>
    </recommendedName>
    <alternativeName>
        <fullName>Elongin 18 kDa subunit</fullName>
    </alternativeName>
    <alternativeName>
        <fullName>RNA polymerase II transcription factor SIII subunit B</fullName>
    </alternativeName>
    <alternativeName>
        <fullName>SIII p18</fullName>
    </alternativeName>
    <alternativeName>
        <fullName>Transcription elongation factor B polypeptide 2</fullName>
    </alternativeName>
</protein>
<organism>
    <name type="scientific">Mus musculus</name>
    <name type="common">Mouse</name>
    <dbReference type="NCBI Taxonomy" id="10090"/>
    <lineage>
        <taxon>Eukaryota</taxon>
        <taxon>Metazoa</taxon>
        <taxon>Chordata</taxon>
        <taxon>Craniata</taxon>
        <taxon>Vertebrata</taxon>
        <taxon>Euteleostomi</taxon>
        <taxon>Mammalia</taxon>
        <taxon>Eutheria</taxon>
        <taxon>Euarchontoglires</taxon>
        <taxon>Glires</taxon>
        <taxon>Rodentia</taxon>
        <taxon>Myomorpha</taxon>
        <taxon>Muroidea</taxon>
        <taxon>Muridae</taxon>
        <taxon>Murinae</taxon>
        <taxon>Mus</taxon>
        <taxon>Mus</taxon>
    </lineage>
</organism>
<evidence type="ECO:0000250" key="1">
    <source>
        <dbReference type="UniProtKB" id="Q15370"/>
    </source>
</evidence>
<evidence type="ECO:0000255" key="2">
    <source>
        <dbReference type="PROSITE-ProRule" id="PRU00214"/>
    </source>
</evidence>
<evidence type="ECO:0000256" key="3">
    <source>
        <dbReference type="SAM" id="MobiDB-lite"/>
    </source>
</evidence>
<evidence type="ECO:0000269" key="4">
    <source>
    </source>
</evidence>
<evidence type="ECO:0000269" key="5">
    <source>
    </source>
</evidence>
<evidence type="ECO:0000269" key="6">
    <source>
    </source>
</evidence>
<evidence type="ECO:0000269" key="7">
    <source>
    </source>
</evidence>
<evidence type="ECO:0000269" key="8">
    <source>
    </source>
</evidence>
<evidence type="ECO:0000269" key="9">
    <source>
    </source>
</evidence>
<evidence type="ECO:0000269" key="10">
    <source>
    </source>
</evidence>
<evidence type="ECO:0000305" key="11"/>
<evidence type="ECO:0000305" key="12">
    <source>
    </source>
</evidence>
<evidence type="ECO:0000312" key="13">
    <source>
        <dbReference type="MGI" id="MGI:1914923"/>
    </source>
</evidence>
<evidence type="ECO:0007744" key="14">
    <source>
        <dbReference type="PDB" id="4JGH"/>
    </source>
</evidence>
<evidence type="ECO:0007744" key="15">
    <source>
    </source>
</evidence>
<evidence type="ECO:0007829" key="16">
    <source>
        <dbReference type="PDB" id="2FNJ"/>
    </source>
</evidence>
<evidence type="ECO:0007829" key="17">
    <source>
        <dbReference type="PDB" id="4JGH"/>
    </source>
</evidence>
<keyword id="KW-0002">3D-structure</keyword>
<keyword id="KW-0007">Acetylation</keyword>
<keyword id="KW-0539">Nucleus</keyword>
<keyword id="KW-0597">Phosphoprotein</keyword>
<keyword id="KW-1185">Reference proteome</keyword>
<keyword id="KW-0804">Transcription</keyword>
<keyword id="KW-0805">Transcription regulation</keyword>
<keyword id="KW-0833">Ubl conjugation pathway</keyword>
<comment type="function">
    <text evidence="1 8 9">SIII, also known as elongin, is a general transcription elongation factor that increases the RNA polymerase II transcription elongation past template-encoded arresting sites (By similarity). Subunit A is transcriptionally active and its transcription activity is strongly enhanced by binding to the dimeric complex of the SIII regulatory subunits B and C (elongin BC complex) (By similarity). In embryonic stem cells, the elongin BC complex is recruited by EPOP to Polycomb group (PcG) target genes in order generate genomic region that display both active and repressive chromatin properties, an important feature of pluripotent stem cells (PubMed:27863225, PubMed:27863226).</text>
</comment>
<comment type="function">
    <text evidence="1 10">Core component of multiple cullin-2 and cullin-5-RING E3 ubiquitin-protein ligase complexes (ECS complexes), which mediate the ubiquitination of target proteins (PubMed:33590678). By binding to BC-box motifs it seems to link target recruitment subunits, like VHL and members of the SOCS box family, to Cullin/RBX1 modules that activate E2 ubiquitination enzymes (By similarity). Component the von Hippel-Lindau ubiquitination complex CBC(VHL) (By similarity). A number of ECS complexes (containing either KLHDC2, KLHDC3, KLHDC10, APPBP2, FEM1A, FEM1B or FEM1C as substrate-recognition component) are part of the DesCEND (destruction via C-end degrons) pathway, which recognizes a C-degron located at the extreme C terminus of target proteins, leading to their ubiquitination and degradation (By similarity). The ECS(ASB9) complex mediates ubiquitination and degradation of CKB (By similarity). As part of a multisubunit ubiquitin ligase complex, polyubiquitinates monoubiquitinated POLR2A (By similarity). ECS(LRR1) ubiquitinates MCM7 and promotes CMG replisome disassembly by VCP and chromatin extraction during S-phase (PubMed:33590678). As part of the ECS(RAB40C) complex, mediates ANKRD28 ubiquitination and degradation, thereby inhibiting protein phosphatase 6 (PP6) complex activity and focal adhesion assembly during cell migration (By similarity).</text>
</comment>
<comment type="pathway">
    <text evidence="10">Protein modification; protein ubiquitination.</text>
</comment>
<comment type="subunit">
    <text evidence="1 4 5 6 7 8 9 10">Heterotrimer of an A (ELOA, ELOA2 or ELOA3P), ELOB and ELOC subunit (PubMed:16498413). The elongin BC complex interacts with EPOP; leading to recruit the elongin BC complex to Polycomb group (PcG) target genes, thereby restricting excessive activity of the PRC2/EED-EZH2 complex (PubMed:27863225, PubMed:27863226). Component of multiple cullin-RING E3 ubiquitin-protein ligase complexes composed of Elongin BC (ELOB and ELOC), a cullin (either CUL2 or CUL5), a catalytic subunit (either RBX1 or RNF7/RBX2), as well as a substrate adapter protein that can be either ASB2, ASB9, ASB11, KLHDC2, KLHDC3, KLHDC10, APPBP2, FEM1A, FEM1B, FEM1C, LRR1, PCMTD1, SOCS1, SOCS2, SOCS5, SPSB1, SPSB3, ELOA, VHL, WSB1 or RAB40C (PubMed:10051596, PubMed:11384984, PubMed:23897481, PubMed:33590678). As part of the Elongin BC E3 ubiquitin ligase complex; interacts with NRBP1 (By similarity). May also interact with DCUN1D1, DCUN1D2, DCUN1D3 and DCUN1D5 (By similarity). May form oligomers as a KLHDC2/KLHDC3-ELOB-ELOC complex; this interaction is autoinhibitory for the E3 ligase complex as the substrate-binding site of KLHDC2/KLHDC3 is blocked in the oligomer (By similarity).</text>
</comment>
<comment type="subcellular location">
    <subcellularLocation>
        <location evidence="12">Nucleus</location>
    </subcellularLocation>
</comment>
<comment type="similarity">
    <text evidence="11">Belongs to the Elongin B family.</text>
</comment>
<sequence>MDVFLMIRRHKTTIFTDAKESSTVFELKRIVEGILKRPPEEQRLYKDDQLLDDGKTLGECGFTSQTARPQAPATVGLAFRADDTFEALRIEPFSSPPELPDVMKPQDSGGSANEQAVQ</sequence>